<gene>
    <name evidence="1" type="primary">xerC</name>
    <name type="ordered locus">Cgl2028</name>
    <name type="ordered locus">cg2224</name>
</gene>
<evidence type="ECO:0000255" key="1">
    <source>
        <dbReference type="HAMAP-Rule" id="MF_01808"/>
    </source>
</evidence>
<evidence type="ECO:0000255" key="2">
    <source>
        <dbReference type="PROSITE-ProRule" id="PRU01246"/>
    </source>
</evidence>
<evidence type="ECO:0000255" key="3">
    <source>
        <dbReference type="PROSITE-ProRule" id="PRU01248"/>
    </source>
</evidence>
<evidence type="ECO:0000305" key="4"/>
<accession>Q8NNZ9</accession>
<protein>
    <recommendedName>
        <fullName evidence="1">Tyrosine recombinase XerC</fullName>
    </recommendedName>
</protein>
<comment type="function">
    <text evidence="1">Site-specific tyrosine recombinase, which acts by catalyzing the cutting and rejoining of the recombining DNA molecules. The XerC-XerD complex is essential to convert dimers of the bacterial chromosome into monomers to permit their segregation at cell division. It also contributes to the segregational stability of plasmids.</text>
</comment>
<comment type="subunit">
    <text evidence="1">Forms a cyclic heterotetrameric complex composed of two molecules of XerC and two molecules of XerD.</text>
</comment>
<comment type="subcellular location">
    <subcellularLocation>
        <location evidence="1">Cytoplasm</location>
    </subcellularLocation>
</comment>
<comment type="similarity">
    <text evidence="1">Belongs to the 'phage' integrase family. XerC subfamily.</text>
</comment>
<comment type="sequence caution" evidence="4">
    <conflict type="erroneous initiation">
        <sequence resource="EMBL-CDS" id="CAF20368"/>
    </conflict>
</comment>
<keyword id="KW-0131">Cell cycle</keyword>
<keyword id="KW-0132">Cell division</keyword>
<keyword id="KW-0159">Chromosome partition</keyword>
<keyword id="KW-0963">Cytoplasm</keyword>
<keyword id="KW-0229">DNA integration</keyword>
<keyword id="KW-0233">DNA recombination</keyword>
<keyword id="KW-0238">DNA-binding</keyword>
<keyword id="KW-1185">Reference proteome</keyword>
<feature type="chain" id="PRO_0000095293" description="Tyrosine recombinase XerC">
    <location>
        <begin position="1"/>
        <end position="308"/>
    </location>
</feature>
<feature type="domain" description="Core-binding (CB)" evidence="3">
    <location>
        <begin position="20"/>
        <end position="101"/>
    </location>
</feature>
<feature type="domain" description="Tyr recombinase" evidence="2">
    <location>
        <begin position="122"/>
        <end position="302"/>
    </location>
</feature>
<feature type="active site" evidence="1">
    <location>
        <position position="163"/>
    </location>
</feature>
<feature type="active site" evidence="1">
    <location>
        <position position="187"/>
    </location>
</feature>
<feature type="active site" evidence="1">
    <location>
        <position position="254"/>
    </location>
</feature>
<feature type="active site" evidence="1">
    <location>
        <position position="257"/>
    </location>
</feature>
<feature type="active site" evidence="1">
    <location>
        <position position="280"/>
    </location>
</feature>
<feature type="active site" description="O-(3'-phospho-DNA)-tyrosine intermediate" evidence="1">
    <location>
        <position position="289"/>
    </location>
</feature>
<organism>
    <name type="scientific">Corynebacterium glutamicum (strain ATCC 13032 / DSM 20300 / JCM 1318 / BCRC 11384 / CCUG 27702 / LMG 3730 / NBRC 12168 / NCIMB 10025 / NRRL B-2784 / 534)</name>
    <dbReference type="NCBI Taxonomy" id="196627"/>
    <lineage>
        <taxon>Bacteria</taxon>
        <taxon>Bacillati</taxon>
        <taxon>Actinomycetota</taxon>
        <taxon>Actinomycetes</taxon>
        <taxon>Mycobacteriales</taxon>
        <taxon>Corynebacteriaceae</taxon>
        <taxon>Corynebacterium</taxon>
    </lineage>
</organism>
<dbReference type="EMBL" id="BA000036">
    <property type="protein sequence ID" value="BAB99421.1"/>
    <property type="molecule type" value="Genomic_DNA"/>
</dbReference>
<dbReference type="EMBL" id="BX927154">
    <property type="protein sequence ID" value="CAF20368.1"/>
    <property type="status" value="ALT_INIT"/>
    <property type="molecule type" value="Genomic_DNA"/>
</dbReference>
<dbReference type="RefSeq" id="NP_601233.1">
    <property type="nucleotide sequence ID" value="NC_003450.3"/>
</dbReference>
<dbReference type="SMR" id="Q8NNZ9"/>
<dbReference type="STRING" id="196627.cg2224"/>
<dbReference type="KEGG" id="cgb:cg2224"/>
<dbReference type="KEGG" id="cgl:Cgl2028"/>
<dbReference type="PATRIC" id="fig|196627.13.peg.1966"/>
<dbReference type="eggNOG" id="COG4974">
    <property type="taxonomic scope" value="Bacteria"/>
</dbReference>
<dbReference type="HOGENOM" id="CLU_027562_9_0_11"/>
<dbReference type="OrthoDB" id="9801717at2"/>
<dbReference type="BioCyc" id="CORYNE:G18NG-11620-MONOMER"/>
<dbReference type="Proteomes" id="UP000000582">
    <property type="component" value="Chromosome"/>
</dbReference>
<dbReference type="Proteomes" id="UP000001009">
    <property type="component" value="Chromosome"/>
</dbReference>
<dbReference type="GO" id="GO:0005737">
    <property type="term" value="C:cytoplasm"/>
    <property type="evidence" value="ECO:0007669"/>
    <property type="project" value="UniProtKB-SubCell"/>
</dbReference>
<dbReference type="GO" id="GO:0003677">
    <property type="term" value="F:DNA binding"/>
    <property type="evidence" value="ECO:0007669"/>
    <property type="project" value="UniProtKB-KW"/>
</dbReference>
<dbReference type="GO" id="GO:0009037">
    <property type="term" value="F:tyrosine-based site-specific recombinase activity"/>
    <property type="evidence" value="ECO:0007669"/>
    <property type="project" value="UniProtKB-UniRule"/>
</dbReference>
<dbReference type="GO" id="GO:0051301">
    <property type="term" value="P:cell division"/>
    <property type="evidence" value="ECO:0007669"/>
    <property type="project" value="UniProtKB-KW"/>
</dbReference>
<dbReference type="GO" id="GO:0007059">
    <property type="term" value="P:chromosome segregation"/>
    <property type="evidence" value="ECO:0007669"/>
    <property type="project" value="UniProtKB-UniRule"/>
</dbReference>
<dbReference type="GO" id="GO:0006313">
    <property type="term" value="P:DNA transposition"/>
    <property type="evidence" value="ECO:0007669"/>
    <property type="project" value="UniProtKB-UniRule"/>
</dbReference>
<dbReference type="CDD" id="cd00798">
    <property type="entry name" value="INT_XerDC_C"/>
    <property type="match status" value="1"/>
</dbReference>
<dbReference type="Gene3D" id="1.10.150.130">
    <property type="match status" value="1"/>
</dbReference>
<dbReference type="Gene3D" id="1.10.443.10">
    <property type="entry name" value="Intergrase catalytic core"/>
    <property type="match status" value="1"/>
</dbReference>
<dbReference type="HAMAP" id="MF_01808">
    <property type="entry name" value="Recomb_XerC_XerD"/>
    <property type="match status" value="1"/>
</dbReference>
<dbReference type="InterPro" id="IPR044068">
    <property type="entry name" value="CB"/>
</dbReference>
<dbReference type="InterPro" id="IPR011010">
    <property type="entry name" value="DNA_brk_join_enz"/>
</dbReference>
<dbReference type="InterPro" id="IPR013762">
    <property type="entry name" value="Integrase-like_cat_sf"/>
</dbReference>
<dbReference type="InterPro" id="IPR002104">
    <property type="entry name" value="Integrase_catalytic"/>
</dbReference>
<dbReference type="InterPro" id="IPR010998">
    <property type="entry name" value="Integrase_recombinase_N"/>
</dbReference>
<dbReference type="InterPro" id="IPR004107">
    <property type="entry name" value="Integrase_SAM-like_N"/>
</dbReference>
<dbReference type="InterPro" id="IPR023009">
    <property type="entry name" value="Tyrosine_recombinase_XerC/XerD"/>
</dbReference>
<dbReference type="InterPro" id="IPR050090">
    <property type="entry name" value="Tyrosine_recombinase_XerCD"/>
</dbReference>
<dbReference type="PANTHER" id="PTHR30349">
    <property type="entry name" value="PHAGE INTEGRASE-RELATED"/>
    <property type="match status" value="1"/>
</dbReference>
<dbReference type="PANTHER" id="PTHR30349:SF77">
    <property type="entry name" value="TYROSINE RECOMBINASE XERC"/>
    <property type="match status" value="1"/>
</dbReference>
<dbReference type="Pfam" id="PF02899">
    <property type="entry name" value="Phage_int_SAM_1"/>
    <property type="match status" value="1"/>
</dbReference>
<dbReference type="Pfam" id="PF00589">
    <property type="entry name" value="Phage_integrase"/>
    <property type="match status" value="1"/>
</dbReference>
<dbReference type="SUPFAM" id="SSF56349">
    <property type="entry name" value="DNA breaking-rejoining enzymes"/>
    <property type="match status" value="1"/>
</dbReference>
<dbReference type="SUPFAM" id="SSF47823">
    <property type="entry name" value="lambda integrase-like, N-terminal domain"/>
    <property type="match status" value="1"/>
</dbReference>
<dbReference type="PROSITE" id="PS51900">
    <property type="entry name" value="CB"/>
    <property type="match status" value="1"/>
</dbReference>
<dbReference type="PROSITE" id="PS51898">
    <property type="entry name" value="TYR_RECOMBINASE"/>
    <property type="match status" value="1"/>
</dbReference>
<sequence length="308" mass="34053">MARSGRNAPPSGISGADAPSKLHTLIDDFCEHLDLVVGRSAATIRGYRSDLYAMADTIEDIDNFSLPTLRQWLGIAVDEGKSRATLARRTASVKAFSSWAQKNGHLKADEAARLISPKITRDLPKILGEQQAGDFVENAASTNEEEFLRDSAILELLYATGMRVAELCGIDLSDIDYDRKMVRVLGKGNKERVVPFGESAHKALRNWLDVRDEMTEDPKALFVGVRGQRINARQVRRIVDRAAKVTGVDHLSPHSLRHTAATHLLDGGADLRQVQELLGHSSMQTTQIYTHVSNKRLLEAFNKAHPRA</sequence>
<name>XERC_CORGL</name>
<proteinExistence type="inferred from homology"/>
<reference key="1">
    <citation type="journal article" date="2003" name="Appl. Microbiol. Biotechnol.">
        <title>The Corynebacterium glutamicum genome: features and impacts on biotechnological processes.</title>
        <authorList>
            <person name="Ikeda M."/>
            <person name="Nakagawa S."/>
        </authorList>
    </citation>
    <scope>NUCLEOTIDE SEQUENCE [LARGE SCALE GENOMIC DNA]</scope>
    <source>
        <strain>ATCC 13032 / DSM 20300 / JCM 1318 / BCRC 11384 / CCUG 27702 / LMG 3730 / NBRC 12168 / NCIMB 10025 / NRRL B-2784 / 534</strain>
    </source>
</reference>
<reference key="2">
    <citation type="journal article" date="2003" name="J. Biotechnol.">
        <title>The complete Corynebacterium glutamicum ATCC 13032 genome sequence and its impact on the production of L-aspartate-derived amino acids and vitamins.</title>
        <authorList>
            <person name="Kalinowski J."/>
            <person name="Bathe B."/>
            <person name="Bartels D."/>
            <person name="Bischoff N."/>
            <person name="Bott M."/>
            <person name="Burkovski A."/>
            <person name="Dusch N."/>
            <person name="Eggeling L."/>
            <person name="Eikmanns B.J."/>
            <person name="Gaigalat L."/>
            <person name="Goesmann A."/>
            <person name="Hartmann M."/>
            <person name="Huthmacher K."/>
            <person name="Kraemer R."/>
            <person name="Linke B."/>
            <person name="McHardy A.C."/>
            <person name="Meyer F."/>
            <person name="Moeckel B."/>
            <person name="Pfefferle W."/>
            <person name="Puehler A."/>
            <person name="Rey D.A."/>
            <person name="Rueckert C."/>
            <person name="Rupp O."/>
            <person name="Sahm H."/>
            <person name="Wendisch V.F."/>
            <person name="Wiegraebe I."/>
            <person name="Tauch A."/>
        </authorList>
    </citation>
    <scope>NUCLEOTIDE SEQUENCE [LARGE SCALE GENOMIC DNA]</scope>
    <source>
        <strain>ATCC 13032 / DSM 20300 / JCM 1318 / BCRC 11384 / CCUG 27702 / LMG 3730 / NBRC 12168 / NCIMB 10025 / NRRL B-2784 / 534</strain>
    </source>
</reference>